<protein>
    <recommendedName>
        <fullName evidence="1">Peptide deformylase 1</fullName>
        <shortName evidence="1">PDF 1</shortName>
        <ecNumber evidence="1">3.5.1.88</ecNumber>
    </recommendedName>
    <alternativeName>
        <fullName evidence="1">Polypeptide deformylase 1</fullName>
    </alternativeName>
</protein>
<reference key="1">
    <citation type="journal article" date="1998" name="Curr. Microbiol.">
        <title>Complementation of an Escherichia coli polypeptide deformylase mutant with a gene from Clostridium acetobutylicum ATCC 824.</title>
        <authorList>
            <person name="Belouski E."/>
            <person name="Gui L."/>
            <person name="Rudolph F.B."/>
            <person name="Bennett G.N."/>
        </authorList>
    </citation>
    <scope>NUCLEOTIDE SEQUENCE [GENOMIC DNA]</scope>
    <source>
        <strain>ATCC 824 / DSM 792 / JCM 1419 / IAM 19013 / LMG 5710 / NBRC 13948 / NRRL B-527 / VKM B-1787 / 2291 / W</strain>
    </source>
</reference>
<reference key="2">
    <citation type="journal article" date="2001" name="J. Bacteriol.">
        <title>Genome sequence and comparative analysis of the solvent-producing bacterium Clostridium acetobutylicum.</title>
        <authorList>
            <person name="Noelling J."/>
            <person name="Breton G."/>
            <person name="Omelchenko M.V."/>
            <person name="Makarova K.S."/>
            <person name="Zeng Q."/>
            <person name="Gibson R."/>
            <person name="Lee H.M."/>
            <person name="Dubois J."/>
            <person name="Qiu D."/>
            <person name="Hitti J."/>
            <person name="Wolf Y.I."/>
            <person name="Tatusov R.L."/>
            <person name="Sabathe F."/>
            <person name="Doucette-Stamm L.A."/>
            <person name="Soucaille P."/>
            <person name="Daly M.J."/>
            <person name="Bennett G.N."/>
            <person name="Koonin E.V."/>
            <person name="Smith D.R."/>
        </authorList>
    </citation>
    <scope>NUCLEOTIDE SEQUENCE [LARGE SCALE GENOMIC DNA]</scope>
    <source>
        <strain>ATCC 824 / DSM 792 / JCM 1419 / IAM 19013 / LMG 5710 / NBRC 13948 / NRRL B-527 / VKM B-1787 / 2291 / W</strain>
    </source>
</reference>
<proteinExistence type="inferred from homology"/>
<comment type="function">
    <text evidence="1">Removes the formyl group from the N-terminal Met of newly synthesized proteins. Requires at least a dipeptide for an efficient rate of reaction. N-terminal L-methionine is a prerequisite for activity but the enzyme has broad specificity at other positions.</text>
</comment>
<comment type="catalytic activity">
    <reaction evidence="1">
        <text>N-terminal N-formyl-L-methionyl-[peptide] + H2O = N-terminal L-methionyl-[peptide] + formate</text>
        <dbReference type="Rhea" id="RHEA:24420"/>
        <dbReference type="Rhea" id="RHEA-COMP:10639"/>
        <dbReference type="Rhea" id="RHEA-COMP:10640"/>
        <dbReference type="ChEBI" id="CHEBI:15377"/>
        <dbReference type="ChEBI" id="CHEBI:15740"/>
        <dbReference type="ChEBI" id="CHEBI:49298"/>
        <dbReference type="ChEBI" id="CHEBI:64731"/>
        <dbReference type="EC" id="3.5.1.88"/>
    </reaction>
</comment>
<comment type="cofactor">
    <cofactor evidence="1">
        <name>Fe(2+)</name>
        <dbReference type="ChEBI" id="CHEBI:29033"/>
    </cofactor>
    <text evidence="1">Binds 1 Fe(2+) ion.</text>
</comment>
<comment type="similarity">
    <text evidence="1">Belongs to the polypeptide deformylase family.</text>
</comment>
<sequence>MAIRSIRKYGDELLRKKSRKVEKIDKRLLTLIDDMFETMYNADGVGLAAPQVGILKRLVVIDVGEGPVVLINPEILETSGKAVDVEGCLSIPERQGEVERPTYVKAKALNEKGEEIVIEAEDLFARAICHETDHLNGVLFVDKLAESEGN</sequence>
<name>DEF1_CLOAB</name>
<keyword id="KW-0378">Hydrolase</keyword>
<keyword id="KW-0408">Iron</keyword>
<keyword id="KW-0479">Metal-binding</keyword>
<keyword id="KW-0648">Protein biosynthesis</keyword>
<keyword id="KW-1185">Reference proteome</keyword>
<accession>O05100</accession>
<gene>
    <name evidence="1" type="primary">def1</name>
    <name type="ordered locus">CA_C1722</name>
</gene>
<dbReference type="EC" id="3.5.1.88" evidence="1"/>
<dbReference type="EMBL" id="U52368">
    <property type="protein sequence ID" value="AAB50347.1"/>
    <property type="molecule type" value="Genomic_DNA"/>
</dbReference>
<dbReference type="EMBL" id="AE001437">
    <property type="protein sequence ID" value="AAK79688.1"/>
    <property type="molecule type" value="Genomic_DNA"/>
</dbReference>
<dbReference type="PIR" id="E97112">
    <property type="entry name" value="E97112"/>
</dbReference>
<dbReference type="RefSeq" id="NP_348348.1">
    <property type="nucleotide sequence ID" value="NC_003030.1"/>
</dbReference>
<dbReference type="SMR" id="O05100"/>
<dbReference type="STRING" id="272562.CA_C1722"/>
<dbReference type="KEGG" id="cac:CA_C1722"/>
<dbReference type="PATRIC" id="fig|272562.8.peg.1924"/>
<dbReference type="eggNOG" id="COG0242">
    <property type="taxonomic scope" value="Bacteria"/>
</dbReference>
<dbReference type="HOGENOM" id="CLU_061901_4_2_9"/>
<dbReference type="OrthoDB" id="9784988at2"/>
<dbReference type="Proteomes" id="UP000000814">
    <property type="component" value="Chromosome"/>
</dbReference>
<dbReference type="GO" id="GO:0046872">
    <property type="term" value="F:metal ion binding"/>
    <property type="evidence" value="ECO:0007669"/>
    <property type="project" value="UniProtKB-KW"/>
</dbReference>
<dbReference type="GO" id="GO:0042586">
    <property type="term" value="F:peptide deformylase activity"/>
    <property type="evidence" value="ECO:0007669"/>
    <property type="project" value="UniProtKB-UniRule"/>
</dbReference>
<dbReference type="GO" id="GO:0043686">
    <property type="term" value="P:co-translational protein modification"/>
    <property type="evidence" value="ECO:0007669"/>
    <property type="project" value="TreeGrafter"/>
</dbReference>
<dbReference type="GO" id="GO:0006412">
    <property type="term" value="P:translation"/>
    <property type="evidence" value="ECO:0007669"/>
    <property type="project" value="UniProtKB-UniRule"/>
</dbReference>
<dbReference type="CDD" id="cd00487">
    <property type="entry name" value="Pep_deformylase"/>
    <property type="match status" value="1"/>
</dbReference>
<dbReference type="FunFam" id="3.90.45.10:FF:000005">
    <property type="entry name" value="Peptide deformylase"/>
    <property type="match status" value="1"/>
</dbReference>
<dbReference type="Gene3D" id="3.90.45.10">
    <property type="entry name" value="Peptide deformylase"/>
    <property type="match status" value="1"/>
</dbReference>
<dbReference type="HAMAP" id="MF_00163">
    <property type="entry name" value="Pep_deformylase"/>
    <property type="match status" value="1"/>
</dbReference>
<dbReference type="InterPro" id="IPR023635">
    <property type="entry name" value="Peptide_deformylase"/>
</dbReference>
<dbReference type="InterPro" id="IPR036821">
    <property type="entry name" value="Peptide_deformylase_sf"/>
</dbReference>
<dbReference type="NCBIfam" id="TIGR00079">
    <property type="entry name" value="pept_deformyl"/>
    <property type="match status" value="1"/>
</dbReference>
<dbReference type="NCBIfam" id="NF001159">
    <property type="entry name" value="PRK00150.1-3"/>
    <property type="match status" value="1"/>
</dbReference>
<dbReference type="PANTHER" id="PTHR10458">
    <property type="entry name" value="PEPTIDE DEFORMYLASE"/>
    <property type="match status" value="1"/>
</dbReference>
<dbReference type="PANTHER" id="PTHR10458:SF22">
    <property type="entry name" value="PEPTIDE DEFORMYLASE"/>
    <property type="match status" value="1"/>
</dbReference>
<dbReference type="Pfam" id="PF01327">
    <property type="entry name" value="Pep_deformylase"/>
    <property type="match status" value="1"/>
</dbReference>
<dbReference type="PIRSF" id="PIRSF004749">
    <property type="entry name" value="Pep_def"/>
    <property type="match status" value="1"/>
</dbReference>
<dbReference type="PRINTS" id="PR01576">
    <property type="entry name" value="PDEFORMYLASE"/>
</dbReference>
<dbReference type="SUPFAM" id="SSF56420">
    <property type="entry name" value="Peptide deformylase"/>
    <property type="match status" value="1"/>
</dbReference>
<feature type="chain" id="PRO_0000082766" description="Peptide deformylase 1">
    <location>
        <begin position="1"/>
        <end position="150"/>
    </location>
</feature>
<feature type="active site" evidence="1">
    <location>
        <position position="131"/>
    </location>
</feature>
<feature type="binding site" evidence="1">
    <location>
        <position position="88"/>
    </location>
    <ligand>
        <name>Fe cation</name>
        <dbReference type="ChEBI" id="CHEBI:24875"/>
    </ligand>
</feature>
<feature type="binding site" evidence="1">
    <location>
        <position position="130"/>
    </location>
    <ligand>
        <name>Fe cation</name>
        <dbReference type="ChEBI" id="CHEBI:24875"/>
    </ligand>
</feature>
<feature type="binding site" evidence="1">
    <location>
        <position position="134"/>
    </location>
    <ligand>
        <name>Fe cation</name>
        <dbReference type="ChEBI" id="CHEBI:24875"/>
    </ligand>
</feature>
<organism>
    <name type="scientific">Clostridium acetobutylicum (strain ATCC 824 / DSM 792 / JCM 1419 / IAM 19013 / LMG 5710 / NBRC 13948 / NRRL B-527 / VKM B-1787 / 2291 / W)</name>
    <dbReference type="NCBI Taxonomy" id="272562"/>
    <lineage>
        <taxon>Bacteria</taxon>
        <taxon>Bacillati</taxon>
        <taxon>Bacillota</taxon>
        <taxon>Clostridia</taxon>
        <taxon>Eubacteriales</taxon>
        <taxon>Clostridiaceae</taxon>
        <taxon>Clostridium</taxon>
    </lineage>
</organism>
<evidence type="ECO:0000255" key="1">
    <source>
        <dbReference type="HAMAP-Rule" id="MF_00163"/>
    </source>
</evidence>